<organismHost>
    <name type="scientific">Cymbidium</name>
    <dbReference type="NCBI Taxonomy" id="14366"/>
</organismHost>
<organismHost>
    <name type="scientific">Odontoglossum</name>
    <dbReference type="NCBI Taxonomy" id="154697"/>
</organismHost>
<proteinExistence type="inferred from homology"/>
<feature type="chain" id="PRO_0000041178" description="Replicase large subunit">
    <location>
        <begin position="1"/>
        <end position="1612"/>
    </location>
</feature>
<feature type="chain" id="PRO_0000041179" description="Replicase small subunit">
    <location>
        <begin position="1"/>
        <end position="1112"/>
    </location>
</feature>
<feature type="domain" description="Alphavirus-like MT" evidence="4">
    <location>
        <begin position="72"/>
        <end position="280"/>
    </location>
</feature>
<feature type="domain" description="(+)RNA virus helicase ATP-binding">
    <location>
        <begin position="794"/>
        <end position="953"/>
    </location>
</feature>
<feature type="domain" description="(+)RNA virus helicase C-terminal">
    <location>
        <begin position="954"/>
        <end position="1112"/>
    </location>
</feature>
<feature type="domain" description="RdRp catalytic" evidence="3">
    <location>
        <begin position="1374"/>
        <end position="1487"/>
    </location>
</feature>
<feature type="region of interest" description="Methyltransferase">
    <location>
        <begin position="50"/>
        <end position="452"/>
    </location>
</feature>
<feature type="region of interest" description="Helicase">
    <location>
        <begin position="822"/>
        <end position="1080"/>
    </location>
</feature>
<feature type="binding site" evidence="2">
    <location>
        <begin position="826"/>
        <end position="833"/>
    </location>
    <ligand>
        <name>ATP</name>
        <dbReference type="ChEBI" id="CHEBI:30616"/>
    </ligand>
</feature>
<evidence type="ECO:0000250" key="1"/>
<evidence type="ECO:0000255" key="2"/>
<evidence type="ECO:0000255" key="3">
    <source>
        <dbReference type="PROSITE-ProRule" id="PRU00539"/>
    </source>
</evidence>
<evidence type="ECO:0000255" key="4">
    <source>
        <dbReference type="PROSITE-ProRule" id="PRU01079"/>
    </source>
</evidence>
<evidence type="ECO:0000305" key="5"/>
<comment type="function">
    <molecule>Replicase large subunit</molecule>
    <text>Is an RNA-dependent RNA polymerase active in viral RNA replication.</text>
</comment>
<comment type="function">
    <molecule>Replicase small subunit</molecule>
    <text evidence="1 5">Is a methyltransferase active in RNA capping and an RNA helicase. Methyltransferase displays a cytoplasmic capping enzyme activity. This function is necessary since all viral RNAs are synthesized in the cytoplasm, and host capping enzymes are restricted to the nucleus. Helicase region probably exhibits NTPase and RNA unwinding activities (Potential). It also acts as a suppressor of RNA-mediated gene silencing, also known as post-transcriptional gene silencing (PTGS), a mechanism of plant viral defense that limits the accumulation of viral RNAs. May mediate silencing suppression through either inhibition of HEN1-mediated siRNA or siRNA demethylation (By similarity).</text>
</comment>
<comment type="catalytic activity">
    <reaction evidence="3">
        <text>RNA(n) + a ribonucleoside 5'-triphosphate = RNA(n+1) + diphosphate</text>
        <dbReference type="Rhea" id="RHEA:21248"/>
        <dbReference type="Rhea" id="RHEA-COMP:14527"/>
        <dbReference type="Rhea" id="RHEA-COMP:17342"/>
        <dbReference type="ChEBI" id="CHEBI:33019"/>
        <dbReference type="ChEBI" id="CHEBI:61557"/>
        <dbReference type="ChEBI" id="CHEBI:140395"/>
        <dbReference type="EC" id="2.7.7.48"/>
    </reaction>
</comment>
<comment type="catalytic activity">
    <reaction>
        <text>ATP + H2O = ADP + phosphate + H(+)</text>
        <dbReference type="Rhea" id="RHEA:13065"/>
        <dbReference type="ChEBI" id="CHEBI:15377"/>
        <dbReference type="ChEBI" id="CHEBI:15378"/>
        <dbReference type="ChEBI" id="CHEBI:30616"/>
        <dbReference type="ChEBI" id="CHEBI:43474"/>
        <dbReference type="ChEBI" id="CHEBI:456216"/>
        <dbReference type="EC" id="3.6.4.13"/>
    </reaction>
</comment>
<comment type="subunit">
    <text evidence="1">Heterodimer of a large and a small subunit.</text>
</comment>
<comment type="miscellaneous">
    <text>This protein is translated as a fusion protein by episodic readthrough of a termination codon. When readthrough of the terminator codon TGA occurs between the codons for Leu-1112 and Gln-1114, this results in the addition of the RdRp region to the replicase.</text>
</comment>
<comment type="similarity">
    <text evidence="5">Belongs to the ssRNA positive-strand viruses RNA-directed RNA polymerase family.</text>
</comment>
<name>RDRP_ORSVS</name>
<reference key="1">
    <citation type="journal article" date="1996" name="Gene">
        <title>The complete sequence of a Singapore isolate of odontoglossum ringspot virus and comparison with other tobamoviruses.</title>
        <authorList>
            <person name="Chng C.G."/>
            <person name="Wong S.M."/>
            <person name="Mahtani P.H."/>
            <person name="Loh C.S."/>
            <person name="Goh C.J."/>
            <person name="Kao M.C.C."/>
            <person name="Chung M.C.M."/>
            <person name="Watanabe Y."/>
        </authorList>
    </citation>
    <scope>NUCLEOTIDE SEQUENCE [GENOMIC RNA]</scope>
</reference>
<accession>Q84133</accession>
<keyword id="KW-0067">ATP-binding</keyword>
<keyword id="KW-0347">Helicase</keyword>
<keyword id="KW-0945">Host-virus interaction</keyword>
<keyword id="KW-0378">Hydrolase</keyword>
<keyword id="KW-1090">Inhibition of host innate immune response by virus</keyword>
<keyword id="KW-0547">Nucleotide-binding</keyword>
<keyword id="KW-0548">Nucleotidyltransferase</keyword>
<keyword id="KW-1159">RNA suppression of termination</keyword>
<keyword id="KW-0696">RNA-directed RNA polymerase</keyword>
<keyword id="KW-0941">Suppressor of RNA silencing</keyword>
<keyword id="KW-0808">Transferase</keyword>
<keyword id="KW-0899">Viral immunoevasion</keyword>
<keyword id="KW-0693">Viral RNA replication</keyword>
<dbReference type="EC" id="2.1.1.-"/>
<dbReference type="EC" id="2.7.7.-"/>
<dbReference type="EC" id="2.7.7.48"/>
<dbReference type="EC" id="3.6.4.13"/>
<dbReference type="EMBL" id="U34586">
    <property type="protein sequence ID" value="AAC55012.2"/>
    <property type="molecule type" value="Genomic_RNA"/>
</dbReference>
<dbReference type="Proteomes" id="UP000008384">
    <property type="component" value="Genome"/>
</dbReference>
<dbReference type="GO" id="GO:0005524">
    <property type="term" value="F:ATP binding"/>
    <property type="evidence" value="ECO:0007669"/>
    <property type="project" value="UniProtKB-KW"/>
</dbReference>
<dbReference type="GO" id="GO:0016887">
    <property type="term" value="F:ATP hydrolysis activity"/>
    <property type="evidence" value="ECO:0007669"/>
    <property type="project" value="RHEA"/>
</dbReference>
<dbReference type="GO" id="GO:0008174">
    <property type="term" value="F:mRNA methyltransferase activity"/>
    <property type="evidence" value="ECO:0007669"/>
    <property type="project" value="InterPro"/>
</dbReference>
<dbReference type="GO" id="GO:0003723">
    <property type="term" value="F:RNA binding"/>
    <property type="evidence" value="ECO:0007669"/>
    <property type="project" value="InterPro"/>
</dbReference>
<dbReference type="GO" id="GO:0003724">
    <property type="term" value="F:RNA helicase activity"/>
    <property type="evidence" value="ECO:0007669"/>
    <property type="project" value="UniProtKB-EC"/>
</dbReference>
<dbReference type="GO" id="GO:0003968">
    <property type="term" value="F:RNA-directed RNA polymerase activity"/>
    <property type="evidence" value="ECO:0007669"/>
    <property type="project" value="UniProtKB-KW"/>
</dbReference>
<dbReference type="GO" id="GO:0006351">
    <property type="term" value="P:DNA-templated transcription"/>
    <property type="evidence" value="ECO:0007669"/>
    <property type="project" value="InterPro"/>
</dbReference>
<dbReference type="GO" id="GO:0016556">
    <property type="term" value="P:mRNA modification"/>
    <property type="evidence" value="ECO:0007669"/>
    <property type="project" value="InterPro"/>
</dbReference>
<dbReference type="GO" id="GO:0006396">
    <property type="term" value="P:RNA processing"/>
    <property type="evidence" value="ECO:0007669"/>
    <property type="project" value="InterPro"/>
</dbReference>
<dbReference type="GO" id="GO:0052170">
    <property type="term" value="P:symbiont-mediated suppression of host innate immune response"/>
    <property type="evidence" value="ECO:0007669"/>
    <property type="project" value="UniProtKB-KW"/>
</dbReference>
<dbReference type="GO" id="GO:0039694">
    <property type="term" value="P:viral RNA genome replication"/>
    <property type="evidence" value="ECO:0007669"/>
    <property type="project" value="InterPro"/>
</dbReference>
<dbReference type="CDD" id="cd23251">
    <property type="entry name" value="Virgaviridae_RdRp"/>
    <property type="match status" value="1"/>
</dbReference>
<dbReference type="Gene3D" id="3.30.450.420">
    <property type="match status" value="1"/>
</dbReference>
<dbReference type="Gene3D" id="3.40.50.300">
    <property type="entry name" value="P-loop containing nucleotide triphosphate hydrolases"/>
    <property type="match status" value="2"/>
</dbReference>
<dbReference type="InterPro" id="IPR027351">
    <property type="entry name" value="(+)RNA_virus_helicase_core_dom"/>
</dbReference>
<dbReference type="InterPro" id="IPR002588">
    <property type="entry name" value="Alphavirus-like_MT_dom"/>
</dbReference>
<dbReference type="InterPro" id="IPR043502">
    <property type="entry name" value="DNA/RNA_pol_sf"/>
</dbReference>
<dbReference type="InterPro" id="IPR027417">
    <property type="entry name" value="P-loop_NTPase"/>
</dbReference>
<dbReference type="InterPro" id="IPR001788">
    <property type="entry name" value="RNA-dep_RNA_pol_alsuvir"/>
</dbReference>
<dbReference type="InterPro" id="IPR007094">
    <property type="entry name" value="RNA-dir_pol_PSvirus"/>
</dbReference>
<dbReference type="InterPro" id="IPR049329">
    <property type="entry name" value="ToMV_Hel_N"/>
</dbReference>
<dbReference type="InterPro" id="IPR047310">
    <property type="entry name" value="Virgaviridae_RdRp"/>
</dbReference>
<dbReference type="Pfam" id="PF00978">
    <property type="entry name" value="RdRP_2"/>
    <property type="match status" value="1"/>
</dbReference>
<dbReference type="Pfam" id="PF20896">
    <property type="entry name" value="ToMV_Hel_N"/>
    <property type="match status" value="1"/>
</dbReference>
<dbReference type="Pfam" id="PF01443">
    <property type="entry name" value="Viral_helicase1"/>
    <property type="match status" value="1"/>
</dbReference>
<dbReference type="Pfam" id="PF01660">
    <property type="entry name" value="Vmethyltransf"/>
    <property type="match status" value="1"/>
</dbReference>
<dbReference type="SUPFAM" id="SSF56672">
    <property type="entry name" value="DNA/RNA polymerases"/>
    <property type="match status" value="1"/>
</dbReference>
<dbReference type="SUPFAM" id="SSF52540">
    <property type="entry name" value="P-loop containing nucleoside triphosphate hydrolases"/>
    <property type="match status" value="1"/>
</dbReference>
<dbReference type="PROSITE" id="PS51743">
    <property type="entry name" value="ALPHAVIRUS_MT"/>
    <property type="match status" value="1"/>
</dbReference>
<dbReference type="PROSITE" id="PS51657">
    <property type="entry name" value="PSRV_HELICASE"/>
    <property type="match status" value="1"/>
</dbReference>
<dbReference type="PROSITE" id="PS50507">
    <property type="entry name" value="RDRP_SSRNA_POS"/>
    <property type="match status" value="1"/>
</dbReference>
<protein>
    <recommendedName>
        <fullName>Replicase large subunit</fullName>
        <ecNumber>2.1.1.-</ecNumber>
        <ecNumber>2.7.7.-</ecNumber>
        <ecNumber>2.7.7.48</ecNumber>
        <ecNumber>3.6.4.13</ecNumber>
    </recommendedName>
    <alternativeName>
        <fullName>183 kDa protein</fullName>
    </alternativeName>
    <alternativeName>
        <fullName>RNA-directed RNA polymerase</fullName>
    </alternativeName>
    <component>
        <recommendedName>
            <fullName>Replicase small subunit</fullName>
            <ecNumber>2.1.1.-</ecNumber>
            <ecNumber>2.7.7.-</ecNumber>
            <ecNumber>3.6.4.13</ecNumber>
        </recommendedName>
        <alternativeName>
            <fullName>126 kDa protein</fullName>
        </alternativeName>
        <alternativeName>
            <fullName>Methyltransferase/RNA helicase</fullName>
            <shortName>MT/HEL</shortName>
        </alternativeName>
    </component>
</protein>
<sequence>MAHFQQTMNNKVIEAGMGRNSLINDLAQRRVYDNAVEELNHRSRRPRVNFSKVISQEQIIQATNAYPEFEITFYNTQLAVHSMAGGLRALELEYLMMQIPFGSITYDIGGNFSAHLYKGRDYVHCCMPNLDIRDVARHINQQDTVSTYLARLERSKRGLPVFQQSAFNKYMNDPDAVCCDKRFQDCSYSAGLPGKTYAVGLHSIYDIPADEFGAALLRKDVHICYAAFHFSENLLLETTSAPLDEIGATFYKSGDRLSFFFQNESTLNYEHSYKNVIKYVCKTFFPASNRFVYHKEFMCTRVNTWFCKFTKVDTYFLFRGVYTRGEDSEQFYTAMDEAWEYKKTLAMLNSERTIFRDRAAVNFWFPKVKDMVIVPLFDGSVTSGKMKRSEVMVNKDFVYTVLNHIRTYQDKALTYKNVLSFVESIRSRVIINGVTARSEWDVDKSVLQALSMTFLLQTKLAEAKDQVVLKKFQKFDDTVTNLFWKQISDAVGDLFPSIKERLISGGFVKVAEQSLQIKTPDEYITPADKLVMEYQATEELQHLDISKPLERAEKYYNALSELSVLKECDEFDITQFKNLCEEKDIAPDVVAKVIVPIMKNELTLPFKNPTPEALSDALSPLPKDLDMRFCLLKLSTCAPFPSVKTLDSGLLPKQSYGDERQFESQSVVSVSDFHLKSVESVKMKSMSSAVYTGPLKVQQMKNYMDYLSASISATVSNLCKVLKDVYGADPESAEKSGVYDVVKGKWLLKPKDKCHAWGVAELNNGEKVIVLLEWADGFPICGDWRRVAVSSDSPIYSDMGKLQTLLSCLKDGEPVLRMPKVTLVDGVPGCGKTKEILETVNFDEDLILVPGKEACKMIIKRANKSGHVRATRDNVRTVDSFLMHLKPKTYNKLFIDEGLMLHTGCVNFLVALSHCREAMVFGDAEQIPFINRVANFPYPKHFRYTCLYHREVRRLSLRCPADVTHFMNSKYDGKVLCTNDVIRSVDAEVVRGKGVFNPKSKPLKGKIITFTQSDKAELKERGYEEVSTFGEINTVHEIQGETFEDVSVVRLTPTPLELISKSSPHVLVALTRHTKSFKYYSVVLDPLVKVWSDLSKVSDFILDMYKVDAGILXQLQVGSIFKGENLFVPCPKSGYISDMQTYYDTLVPGNSTILNEYDAVTMNLRENNLNVKDCTIDFSKSVSVPRQQQEFFTPAHRTAAERPRSAGLLENLVAMIKRNFNSPDLTGILDIEDTAELVVNKFWDAYIIDELSGGNVTPMTSDAFHRWMAKQEKSTIGQLADFDFVDLPAIDQYKHMIKAQPKQKLGLSPQDEYAALQTIVYHSKQINAIFGPLFSELTRQLLERIDSSKFLFYTRKTPEQIEAFFSDLDSTVPMEVLELDISKYDKSQNEFHCAVEYLIWEKLGLNGFLEEVWKQGHRKTSLKDYTAGIKTCLWYQRKSGDVTTFIGNTVIIAACLASMIPMDKVIKAAFCGDDSILYIPKGLDLPDIQSGANLMWNFEAKLYRKRYGYFCGRYIIHHDRGAIVYYDPLKLISKLGCKHIKSLDHLEEFRISLCDVSSSLNNCAYFGQLNDAIAEVHKTAVNGSFAFCSIVKYLSDKNLFRTLFNNGSSTKG</sequence>
<organism>
    <name type="scientific">Odontoglossum ringspot virus (isolate Singapore 1)</name>
    <name type="common">ORSV</name>
    <dbReference type="NCBI Taxonomy" id="138662"/>
    <lineage>
        <taxon>Viruses</taxon>
        <taxon>Riboviria</taxon>
        <taxon>Orthornavirae</taxon>
        <taxon>Kitrinoviricota</taxon>
        <taxon>Alsuviricetes</taxon>
        <taxon>Martellivirales</taxon>
        <taxon>Virgaviridae</taxon>
        <taxon>Tobamovirus</taxon>
        <taxon>Odontoglossum ringspot virus</taxon>
    </lineage>
</organism>